<accession>Q7XCG7</accession>
<accession>A3C725</accession>
<accession>Q9LD06</accession>
<organism>
    <name type="scientific">Oryza sativa subsp. japonica</name>
    <name type="common">Rice</name>
    <dbReference type="NCBI Taxonomy" id="39947"/>
    <lineage>
        <taxon>Eukaryota</taxon>
        <taxon>Viridiplantae</taxon>
        <taxon>Streptophyta</taxon>
        <taxon>Embryophyta</taxon>
        <taxon>Tracheophyta</taxon>
        <taxon>Spermatophyta</taxon>
        <taxon>Magnoliopsida</taxon>
        <taxon>Liliopsida</taxon>
        <taxon>Poales</taxon>
        <taxon>Poaceae</taxon>
        <taxon>BOP clade</taxon>
        <taxon>Oryzoideae</taxon>
        <taxon>Oryzeae</taxon>
        <taxon>Oryzinae</taxon>
        <taxon>Oryza</taxon>
        <taxon>Oryza sativa</taxon>
    </lineage>
</organism>
<name>EXPB9_ORYSJ</name>
<gene>
    <name type="primary">EXPB9</name>
    <name type="ordered locus">Os10g0548600</name>
    <name type="ordered locus">LOC_Os10g40090</name>
    <name evidence="6" type="ORF">OsJ_32365</name>
    <name type="ORF">OSJNBa0082M15.4</name>
</gene>
<evidence type="ECO:0000250" key="1"/>
<evidence type="ECO:0000255" key="2"/>
<evidence type="ECO:0000255" key="3">
    <source>
        <dbReference type="PROSITE-ProRule" id="PRU00078"/>
    </source>
</evidence>
<evidence type="ECO:0000255" key="4">
    <source>
        <dbReference type="PROSITE-ProRule" id="PRU00079"/>
    </source>
</evidence>
<evidence type="ECO:0000305" key="5"/>
<evidence type="ECO:0000312" key="6">
    <source>
        <dbReference type="EMBL" id="EAZ16888.1"/>
    </source>
</evidence>
<proteinExistence type="evidence at transcript level"/>
<feature type="signal peptide" evidence="2">
    <location>
        <begin position="1"/>
        <end position="24"/>
    </location>
</feature>
<feature type="chain" id="PRO_0000252020" description="Expansin-B9">
    <location>
        <begin position="25"/>
        <end position="269"/>
    </location>
</feature>
<feature type="domain" description="Expansin-like EG45" evidence="4">
    <location>
        <begin position="63"/>
        <end position="169"/>
    </location>
</feature>
<feature type="domain" description="Expansin-like CBD" evidence="3">
    <location>
        <begin position="183"/>
        <end position="264"/>
    </location>
</feature>
<feature type="glycosylation site" description="N-linked (GlcNAc...) asparagine" evidence="2">
    <location>
        <position position="34"/>
    </location>
</feature>
<feature type="disulfide bond" evidence="4">
    <location>
        <begin position="66"/>
        <end position="94"/>
    </location>
</feature>
<feature type="disulfide bond" evidence="4">
    <location>
        <begin position="97"/>
        <end position="164"/>
    </location>
</feature>
<feature type="disulfide bond" evidence="4">
    <location>
        <begin position="102"/>
        <end position="108"/>
    </location>
</feature>
<dbReference type="EMBL" id="AF261277">
    <property type="protein sequence ID" value="AAF72990.1"/>
    <property type="molecule type" value="mRNA"/>
</dbReference>
<dbReference type="EMBL" id="AF220610">
    <property type="protein sequence ID" value="AAQ13902.1"/>
    <property type="molecule type" value="mRNA"/>
</dbReference>
<dbReference type="EMBL" id="AC020666">
    <property type="protein sequence ID" value="AAK43515.1"/>
    <property type="molecule type" value="Genomic_DNA"/>
</dbReference>
<dbReference type="EMBL" id="DP000086">
    <property type="protein sequence ID" value="AAP54906.1"/>
    <property type="molecule type" value="Genomic_DNA"/>
</dbReference>
<dbReference type="EMBL" id="AP008216">
    <property type="protein sequence ID" value="BAF27142.1"/>
    <property type="molecule type" value="Genomic_DNA"/>
</dbReference>
<dbReference type="EMBL" id="AP014966">
    <property type="protein sequence ID" value="BAT11929.1"/>
    <property type="molecule type" value="Genomic_DNA"/>
</dbReference>
<dbReference type="EMBL" id="CM000147">
    <property type="protein sequence ID" value="EAZ16888.1"/>
    <property type="molecule type" value="Genomic_DNA"/>
</dbReference>
<dbReference type="EMBL" id="AK099112">
    <property type="protein sequence ID" value="BAG93932.1"/>
    <property type="molecule type" value="mRNA"/>
</dbReference>
<dbReference type="RefSeq" id="XP_015614058.1">
    <property type="nucleotide sequence ID" value="XM_015758572.1"/>
</dbReference>
<dbReference type="SMR" id="Q7XCG7"/>
<dbReference type="FunCoup" id="Q7XCG7">
    <property type="interactions" value="10"/>
</dbReference>
<dbReference type="STRING" id="39947.Q7XCG7"/>
<dbReference type="GlyCosmos" id="Q7XCG7">
    <property type="glycosylation" value="1 site, No reported glycans"/>
</dbReference>
<dbReference type="PaxDb" id="39947-Q7XCG7"/>
<dbReference type="EnsemblPlants" id="Os10t0548600-01">
    <property type="protein sequence ID" value="Os10t0548600-01"/>
    <property type="gene ID" value="Os10g0548600"/>
</dbReference>
<dbReference type="Gramene" id="Os10t0548600-01">
    <property type="protein sequence ID" value="Os10t0548600-01"/>
    <property type="gene ID" value="Os10g0548600"/>
</dbReference>
<dbReference type="KEGG" id="dosa:Os10g0548600"/>
<dbReference type="eggNOG" id="ENOG502QRTE">
    <property type="taxonomic scope" value="Eukaryota"/>
</dbReference>
<dbReference type="HOGENOM" id="CLU_027462_1_0_1"/>
<dbReference type="InParanoid" id="Q7XCG7"/>
<dbReference type="OMA" id="TWYGQPY"/>
<dbReference type="OrthoDB" id="5823761at2759"/>
<dbReference type="Proteomes" id="UP000000763">
    <property type="component" value="Chromosome 10"/>
</dbReference>
<dbReference type="Proteomes" id="UP000007752">
    <property type="component" value="Chromosome 10"/>
</dbReference>
<dbReference type="Proteomes" id="UP000059680">
    <property type="component" value="Chromosome 10"/>
</dbReference>
<dbReference type="ExpressionAtlas" id="Q7XCG7">
    <property type="expression patterns" value="baseline and differential"/>
</dbReference>
<dbReference type="GO" id="GO:0005576">
    <property type="term" value="C:extracellular region"/>
    <property type="evidence" value="ECO:0007669"/>
    <property type="project" value="UniProtKB-KW"/>
</dbReference>
<dbReference type="GO" id="GO:0016020">
    <property type="term" value="C:membrane"/>
    <property type="evidence" value="ECO:0007669"/>
    <property type="project" value="UniProtKB-SubCell"/>
</dbReference>
<dbReference type="GO" id="GO:0009828">
    <property type="term" value="P:plant-type cell wall loosening"/>
    <property type="evidence" value="ECO:0000250"/>
    <property type="project" value="UniProtKB"/>
</dbReference>
<dbReference type="GO" id="GO:0019953">
    <property type="term" value="P:sexual reproduction"/>
    <property type="evidence" value="ECO:0007669"/>
    <property type="project" value="InterPro"/>
</dbReference>
<dbReference type="CDD" id="cd22275">
    <property type="entry name" value="DPBB_EXPB_N"/>
    <property type="match status" value="1"/>
</dbReference>
<dbReference type="Gene3D" id="2.60.40.760">
    <property type="entry name" value="Expansin, cellulose-binding-like domain"/>
    <property type="match status" value="1"/>
</dbReference>
<dbReference type="Gene3D" id="2.40.40.10">
    <property type="entry name" value="RlpA-like domain"/>
    <property type="match status" value="1"/>
</dbReference>
<dbReference type="InterPro" id="IPR007118">
    <property type="entry name" value="Expan_Lol_pI"/>
</dbReference>
<dbReference type="InterPro" id="IPR007112">
    <property type="entry name" value="Expansin/allergen_DPBB_dom"/>
</dbReference>
<dbReference type="InterPro" id="IPR007117">
    <property type="entry name" value="Expansin_CBD"/>
</dbReference>
<dbReference type="InterPro" id="IPR036749">
    <property type="entry name" value="Expansin_CBD_sf"/>
</dbReference>
<dbReference type="InterPro" id="IPR005795">
    <property type="entry name" value="LolPI"/>
</dbReference>
<dbReference type="InterPro" id="IPR009009">
    <property type="entry name" value="RlpA-like_DPBB"/>
</dbReference>
<dbReference type="InterPro" id="IPR036908">
    <property type="entry name" value="RlpA-like_sf"/>
</dbReference>
<dbReference type="PANTHER" id="PTHR31692">
    <property type="entry name" value="EXPANSIN-B3"/>
    <property type="match status" value="1"/>
</dbReference>
<dbReference type="PANTHER" id="PTHR31692:SF7">
    <property type="entry name" value="EXPANSIN-B9"/>
    <property type="match status" value="1"/>
</dbReference>
<dbReference type="Pfam" id="PF03330">
    <property type="entry name" value="DPBB_1"/>
    <property type="match status" value="1"/>
</dbReference>
<dbReference type="Pfam" id="PF01357">
    <property type="entry name" value="Expansin_C"/>
    <property type="match status" value="1"/>
</dbReference>
<dbReference type="PRINTS" id="PR01225">
    <property type="entry name" value="EXPANSNFAMLY"/>
</dbReference>
<dbReference type="PRINTS" id="PR00829">
    <property type="entry name" value="LOLP1ALLERGN"/>
</dbReference>
<dbReference type="SMART" id="SM00837">
    <property type="entry name" value="DPBB_1"/>
    <property type="match status" value="1"/>
</dbReference>
<dbReference type="SUPFAM" id="SSF50685">
    <property type="entry name" value="Barwin-like endoglucanases"/>
    <property type="match status" value="1"/>
</dbReference>
<dbReference type="SUPFAM" id="SSF49590">
    <property type="entry name" value="PHL pollen allergen"/>
    <property type="match status" value="1"/>
</dbReference>
<dbReference type="PROSITE" id="PS50843">
    <property type="entry name" value="EXPANSIN_CBD"/>
    <property type="match status" value="1"/>
</dbReference>
<dbReference type="PROSITE" id="PS50842">
    <property type="entry name" value="EXPANSIN_EG45"/>
    <property type="match status" value="1"/>
</dbReference>
<protein>
    <recommendedName>
        <fullName>Expansin-B9</fullName>
    </recommendedName>
    <alternativeName>
        <fullName>Beta-expansin-9</fullName>
    </alternativeName>
    <alternativeName>
        <fullName>OsEXPB9</fullName>
    </alternativeName>
    <alternativeName>
        <fullName>OsaEXPb1.6</fullName>
    </alternativeName>
</protein>
<sequence length="269" mass="28985">MGSLTTNIVLAVAVVAALVGGGSCGPPKVPPGPNITTNYNAPWLPARATWYGQPYGSGSTDNGGACGIKNVNLPPYNGMISCGNVPIFKDGRGCGSCYEVKCEQPAACSKQPVTVFITDMNYEPISAYHFDFSGKAFGAMACPGKETELRKAGIIDMQFRRVRCKYPGGQKVTFHVEKGSNPNYLAVLVKFVADDGDVIQMDLQEAGLPAWRPMKLSWGAIWRMDTATPLKAPFSIRVTTESGKSLIAKDVIPVNWMPDAIYVSNVQFY</sequence>
<comment type="function">
    <text evidence="1">May cause loosening and extension of plant cell walls by disrupting non-covalent bonding between cellulose microfibrils and matrix glucans. No enzymatic activity has been found. May be required for rapid internodal elongation in deepwater rice during submergence (By similarity).</text>
</comment>
<comment type="subcellular location">
    <subcellularLocation>
        <location evidence="1">Secreted</location>
        <location evidence="1">Cell wall</location>
    </subcellularLocation>
    <subcellularLocation>
        <location evidence="1">Membrane</location>
        <topology evidence="1">Peripheral membrane protein</topology>
    </subcellularLocation>
</comment>
<comment type="similarity">
    <text evidence="5">Belongs to the expansin family. Expansin B subfamily.</text>
</comment>
<comment type="online information" name="EXPANSIN homepage">
    <link uri="https://www.dept.psu.edu/biology/groups/expansins/index.htm"/>
</comment>
<reference key="1">
    <citation type="journal article" date="1997" name="Proc. Natl. Acad. Sci. U.S.A.">
        <title>Group I allergens of grass pollen as cell wall-loosening agents.</title>
        <authorList>
            <person name="Cosgrove D.J."/>
            <person name="Bedinger P.A."/>
            <person name="Durachko D.M."/>
        </authorList>
    </citation>
    <scope>NUCLEOTIDE SEQUENCE [MRNA]</scope>
    <source>
        <tissue>Panicle</tissue>
    </source>
</reference>
<reference key="2">
    <citation type="submission" date="2005-11" db="EMBL/GenBank/DDBJ databases">
        <title>Isolation and characterization of a pollen allergen gene from rice.</title>
        <authorList>
            <person name="Gupta V."/>
            <person name="Tyagi A.K."/>
        </authorList>
    </citation>
    <scope>NUCLEOTIDE SEQUENCE [MRNA]</scope>
</reference>
<reference key="3">
    <citation type="journal article" date="2003" name="Science">
        <title>In-depth view of structure, activity, and evolution of rice chromosome 10.</title>
        <authorList>
            <person name="Yu Y."/>
            <person name="Rambo T."/>
            <person name="Currie J."/>
            <person name="Saski C."/>
            <person name="Kim H.-R."/>
            <person name="Collura K."/>
            <person name="Thompson S."/>
            <person name="Simmons J."/>
            <person name="Yang T.-J."/>
            <person name="Nah G."/>
            <person name="Patel A.J."/>
            <person name="Thurmond S."/>
            <person name="Henry D."/>
            <person name="Oates R."/>
            <person name="Palmer M."/>
            <person name="Pries G."/>
            <person name="Gibson J."/>
            <person name="Anderson H."/>
            <person name="Paradkar M."/>
            <person name="Crane L."/>
            <person name="Dale J."/>
            <person name="Carver M.B."/>
            <person name="Wood T."/>
            <person name="Frisch D."/>
            <person name="Engler F."/>
            <person name="Soderlund C."/>
            <person name="Palmer L.E."/>
            <person name="Teytelman L."/>
            <person name="Nascimento L."/>
            <person name="De la Bastide M."/>
            <person name="Spiegel L."/>
            <person name="Ware D."/>
            <person name="O'Shaughnessy A."/>
            <person name="Dike S."/>
            <person name="Dedhia N."/>
            <person name="Preston R."/>
            <person name="Huang E."/>
            <person name="Ferraro K."/>
            <person name="Kuit K."/>
            <person name="Miller B."/>
            <person name="Zutavern T."/>
            <person name="Katzenberger F."/>
            <person name="Muller S."/>
            <person name="Balija V."/>
            <person name="Martienssen R.A."/>
            <person name="Stein L."/>
            <person name="Minx P."/>
            <person name="Johnson D."/>
            <person name="Cordum H."/>
            <person name="Mardis E."/>
            <person name="Cheng Z."/>
            <person name="Jiang J."/>
            <person name="Wilson R."/>
            <person name="McCombie W.R."/>
            <person name="Wing R.A."/>
            <person name="Yuan Q."/>
            <person name="Ouyang S."/>
            <person name="Liu J."/>
            <person name="Jones K.M."/>
            <person name="Gansberger K."/>
            <person name="Moffat K."/>
            <person name="Hill J."/>
            <person name="Tsitrin T."/>
            <person name="Overton L."/>
            <person name="Bera J."/>
            <person name="Kim M."/>
            <person name="Jin S."/>
            <person name="Tallon L."/>
            <person name="Ciecko A."/>
            <person name="Pai G."/>
            <person name="Van Aken S."/>
            <person name="Utterback T."/>
            <person name="Reidmuller S."/>
            <person name="Bormann J."/>
            <person name="Feldblyum T."/>
            <person name="Hsiao J."/>
            <person name="Zismann V."/>
            <person name="Blunt S."/>
            <person name="de Vazeille A.R."/>
            <person name="Shaffer T."/>
            <person name="Koo H."/>
            <person name="Suh B."/>
            <person name="Yang Q."/>
            <person name="Haas B."/>
            <person name="Peterson J."/>
            <person name="Pertea M."/>
            <person name="Volfovsky N."/>
            <person name="Wortman J."/>
            <person name="White O."/>
            <person name="Salzberg S.L."/>
            <person name="Fraser C.M."/>
            <person name="Buell C.R."/>
            <person name="Messing J."/>
            <person name="Song R."/>
            <person name="Fuks G."/>
            <person name="Llaca V."/>
            <person name="Kovchak S."/>
            <person name="Young S."/>
            <person name="Bowers J.E."/>
            <person name="Paterson A.H."/>
            <person name="Johns M.A."/>
            <person name="Mao L."/>
            <person name="Pan H."/>
            <person name="Dean R.A."/>
        </authorList>
    </citation>
    <scope>NUCLEOTIDE SEQUENCE [LARGE SCALE GENOMIC DNA]</scope>
    <source>
        <strain>cv. Nipponbare</strain>
    </source>
</reference>
<reference key="4">
    <citation type="journal article" date="2005" name="Nature">
        <title>The map-based sequence of the rice genome.</title>
        <authorList>
            <consortium name="International rice genome sequencing project (IRGSP)"/>
        </authorList>
    </citation>
    <scope>NUCLEOTIDE SEQUENCE [LARGE SCALE GENOMIC DNA]</scope>
    <source>
        <strain>cv. Nipponbare</strain>
    </source>
</reference>
<reference key="5">
    <citation type="journal article" date="2008" name="Nucleic Acids Res.">
        <title>The rice annotation project database (RAP-DB): 2008 update.</title>
        <authorList>
            <consortium name="The rice annotation project (RAP)"/>
        </authorList>
    </citation>
    <scope>GENOME REANNOTATION</scope>
    <source>
        <strain>cv. Nipponbare</strain>
    </source>
</reference>
<reference key="6">
    <citation type="journal article" date="2013" name="Rice">
        <title>Improvement of the Oryza sativa Nipponbare reference genome using next generation sequence and optical map data.</title>
        <authorList>
            <person name="Kawahara Y."/>
            <person name="de la Bastide M."/>
            <person name="Hamilton J.P."/>
            <person name="Kanamori H."/>
            <person name="McCombie W.R."/>
            <person name="Ouyang S."/>
            <person name="Schwartz D.C."/>
            <person name="Tanaka T."/>
            <person name="Wu J."/>
            <person name="Zhou S."/>
            <person name="Childs K.L."/>
            <person name="Davidson R.M."/>
            <person name="Lin H."/>
            <person name="Quesada-Ocampo L."/>
            <person name="Vaillancourt B."/>
            <person name="Sakai H."/>
            <person name="Lee S.S."/>
            <person name="Kim J."/>
            <person name="Numa H."/>
            <person name="Itoh T."/>
            <person name="Buell C.R."/>
            <person name="Matsumoto T."/>
        </authorList>
    </citation>
    <scope>GENOME REANNOTATION</scope>
    <source>
        <strain>cv. Nipponbare</strain>
    </source>
</reference>
<reference key="7">
    <citation type="journal article" date="2005" name="PLoS Biol.">
        <title>The genomes of Oryza sativa: a history of duplications.</title>
        <authorList>
            <person name="Yu J."/>
            <person name="Wang J."/>
            <person name="Lin W."/>
            <person name="Li S."/>
            <person name="Li H."/>
            <person name="Zhou J."/>
            <person name="Ni P."/>
            <person name="Dong W."/>
            <person name="Hu S."/>
            <person name="Zeng C."/>
            <person name="Zhang J."/>
            <person name="Zhang Y."/>
            <person name="Li R."/>
            <person name="Xu Z."/>
            <person name="Li S."/>
            <person name="Li X."/>
            <person name="Zheng H."/>
            <person name="Cong L."/>
            <person name="Lin L."/>
            <person name="Yin J."/>
            <person name="Geng J."/>
            <person name="Li G."/>
            <person name="Shi J."/>
            <person name="Liu J."/>
            <person name="Lv H."/>
            <person name="Li J."/>
            <person name="Wang J."/>
            <person name="Deng Y."/>
            <person name="Ran L."/>
            <person name="Shi X."/>
            <person name="Wang X."/>
            <person name="Wu Q."/>
            <person name="Li C."/>
            <person name="Ren X."/>
            <person name="Wang J."/>
            <person name="Wang X."/>
            <person name="Li D."/>
            <person name="Liu D."/>
            <person name="Zhang X."/>
            <person name="Ji Z."/>
            <person name="Zhao W."/>
            <person name="Sun Y."/>
            <person name="Zhang Z."/>
            <person name="Bao J."/>
            <person name="Han Y."/>
            <person name="Dong L."/>
            <person name="Ji J."/>
            <person name="Chen P."/>
            <person name="Wu S."/>
            <person name="Liu J."/>
            <person name="Xiao Y."/>
            <person name="Bu D."/>
            <person name="Tan J."/>
            <person name="Yang L."/>
            <person name="Ye C."/>
            <person name="Zhang J."/>
            <person name="Xu J."/>
            <person name="Zhou Y."/>
            <person name="Yu Y."/>
            <person name="Zhang B."/>
            <person name="Zhuang S."/>
            <person name="Wei H."/>
            <person name="Liu B."/>
            <person name="Lei M."/>
            <person name="Yu H."/>
            <person name="Li Y."/>
            <person name="Xu H."/>
            <person name="Wei S."/>
            <person name="He X."/>
            <person name="Fang L."/>
            <person name="Zhang Z."/>
            <person name="Zhang Y."/>
            <person name="Huang X."/>
            <person name="Su Z."/>
            <person name="Tong W."/>
            <person name="Li J."/>
            <person name="Tong Z."/>
            <person name="Li S."/>
            <person name="Ye J."/>
            <person name="Wang L."/>
            <person name="Fang L."/>
            <person name="Lei T."/>
            <person name="Chen C.-S."/>
            <person name="Chen H.-C."/>
            <person name="Xu Z."/>
            <person name="Li H."/>
            <person name="Huang H."/>
            <person name="Zhang F."/>
            <person name="Xu H."/>
            <person name="Li N."/>
            <person name="Zhao C."/>
            <person name="Li S."/>
            <person name="Dong L."/>
            <person name="Huang Y."/>
            <person name="Li L."/>
            <person name="Xi Y."/>
            <person name="Qi Q."/>
            <person name="Li W."/>
            <person name="Zhang B."/>
            <person name="Hu W."/>
            <person name="Zhang Y."/>
            <person name="Tian X."/>
            <person name="Jiao Y."/>
            <person name="Liang X."/>
            <person name="Jin J."/>
            <person name="Gao L."/>
            <person name="Zheng W."/>
            <person name="Hao B."/>
            <person name="Liu S.-M."/>
            <person name="Wang W."/>
            <person name="Yuan L."/>
            <person name="Cao M."/>
            <person name="McDermott J."/>
            <person name="Samudrala R."/>
            <person name="Wang J."/>
            <person name="Wong G.K.-S."/>
            <person name="Yang H."/>
        </authorList>
    </citation>
    <scope>NUCLEOTIDE SEQUENCE [LARGE SCALE GENOMIC DNA]</scope>
    <source>
        <strain>cv. Nipponbare</strain>
    </source>
</reference>
<reference key="8">
    <citation type="journal article" date="2003" name="Science">
        <title>Collection, mapping, and annotation of over 28,000 cDNA clones from japonica rice.</title>
        <authorList>
            <consortium name="The rice full-length cDNA consortium"/>
        </authorList>
    </citation>
    <scope>NUCLEOTIDE SEQUENCE [LARGE SCALE MRNA]</scope>
    <source>
        <strain>cv. Nipponbare</strain>
    </source>
</reference>
<reference key="9">
    <citation type="journal article" date="2004" name="Plant Mol. Biol.">
        <title>Nomenclature for members of the expansin superfamily of genes and proteins.</title>
        <authorList>
            <person name="Kende H."/>
            <person name="Bradford K.J."/>
            <person name="Brummell D.A."/>
            <person name="Cho H.-T."/>
            <person name="Cosgrove D.J."/>
            <person name="Fleming A.J."/>
            <person name="Gehring C."/>
            <person name="Lee Y."/>
            <person name="McQueen-Mason S.J."/>
            <person name="Rose J.K.C."/>
            <person name="Voesenek L.A.C."/>
        </authorList>
    </citation>
    <scope>NOMENCLATURE</scope>
</reference>
<keyword id="KW-0134">Cell wall</keyword>
<keyword id="KW-0961">Cell wall biogenesis/degradation</keyword>
<keyword id="KW-1015">Disulfide bond</keyword>
<keyword id="KW-0325">Glycoprotein</keyword>
<keyword id="KW-0472">Membrane</keyword>
<keyword id="KW-1185">Reference proteome</keyword>
<keyword id="KW-0964">Secreted</keyword>
<keyword id="KW-0732">Signal</keyword>